<keyword id="KW-0113">Calvin cycle</keyword>
<keyword id="KW-0120">Carbon dioxide fixation</keyword>
<keyword id="KW-0150">Chloroplast</keyword>
<keyword id="KW-0456">Lyase</keyword>
<keyword id="KW-0460">Magnesium</keyword>
<keyword id="KW-0479">Metal-binding</keyword>
<keyword id="KW-0488">Methylation</keyword>
<keyword id="KW-0503">Monooxygenase</keyword>
<keyword id="KW-0560">Oxidoreductase</keyword>
<keyword id="KW-0601">Photorespiration</keyword>
<keyword id="KW-0602">Photosynthesis</keyword>
<keyword id="KW-0934">Plastid</keyword>
<comment type="function">
    <text evidence="1">RuBisCO catalyzes two reactions: the carboxylation of D-ribulose 1,5-bisphosphate, the primary event in carbon dioxide fixation, as well as the oxidative fragmentation of the pentose substrate in the photorespiration process. Both reactions occur simultaneously and in competition at the same active site.</text>
</comment>
<comment type="catalytic activity">
    <reaction evidence="1">
        <text>2 (2R)-3-phosphoglycerate + 2 H(+) = D-ribulose 1,5-bisphosphate + CO2 + H2O</text>
        <dbReference type="Rhea" id="RHEA:23124"/>
        <dbReference type="ChEBI" id="CHEBI:15377"/>
        <dbReference type="ChEBI" id="CHEBI:15378"/>
        <dbReference type="ChEBI" id="CHEBI:16526"/>
        <dbReference type="ChEBI" id="CHEBI:57870"/>
        <dbReference type="ChEBI" id="CHEBI:58272"/>
        <dbReference type="EC" id="4.1.1.39"/>
    </reaction>
</comment>
<comment type="catalytic activity">
    <reaction evidence="1">
        <text>D-ribulose 1,5-bisphosphate + O2 = 2-phosphoglycolate + (2R)-3-phosphoglycerate + 2 H(+)</text>
        <dbReference type="Rhea" id="RHEA:36631"/>
        <dbReference type="ChEBI" id="CHEBI:15378"/>
        <dbReference type="ChEBI" id="CHEBI:15379"/>
        <dbReference type="ChEBI" id="CHEBI:57870"/>
        <dbReference type="ChEBI" id="CHEBI:58033"/>
        <dbReference type="ChEBI" id="CHEBI:58272"/>
    </reaction>
</comment>
<comment type="cofactor">
    <cofactor evidence="1">
        <name>Mg(2+)</name>
        <dbReference type="ChEBI" id="CHEBI:18420"/>
    </cofactor>
    <text evidence="1">Binds 1 Mg(2+) ion per subunit.</text>
</comment>
<comment type="subunit">
    <text evidence="1">Heterohexadecamer of 8 large chains and 8 small chains.</text>
</comment>
<comment type="subcellular location">
    <subcellularLocation>
        <location>Plastid</location>
        <location>Chloroplast</location>
    </subcellularLocation>
</comment>
<comment type="miscellaneous">
    <text evidence="1">The basic functional RuBisCO is composed of a large chain homodimer in a 'head-to-tail' conformation. In form I RuBisCO this homodimer is arranged in a barrel-like tetramer with the small subunits forming a tetrameric 'cap' on each end of the 'barrel'.</text>
</comment>
<comment type="similarity">
    <text evidence="1">Belongs to the RuBisCO large chain family. Type I subfamily.</text>
</comment>
<reference key="1">
    <citation type="journal article" date="1992" name="Science">
        <title>Carnivorous plants: phylogeny and structural evolution.</title>
        <authorList>
            <person name="Albert V.A."/>
            <person name="Williams S.E."/>
            <person name="Chase M.W."/>
        </authorList>
    </citation>
    <scope>NUCLEOTIDE SEQUENCE [GENOMIC DNA]</scope>
</reference>
<accession>P28451</accession>
<protein>
    <recommendedName>
        <fullName evidence="1">Ribulose bisphosphate carboxylase large chain</fullName>
        <shortName evidence="1">RuBisCO large subunit</shortName>
        <ecNumber evidence="1">4.1.1.39</ecNumber>
    </recommendedName>
</protein>
<gene>
    <name evidence="1" type="primary">rbcL</name>
</gene>
<feature type="chain" id="PRO_0000062586" description="Ribulose bisphosphate carboxylase large chain">
    <location>
        <begin position="1" status="less than"/>
        <end position="465"/>
    </location>
</feature>
<feature type="active site" description="Proton acceptor" evidence="1">
    <location>
        <position position="165"/>
    </location>
</feature>
<feature type="active site" description="Proton acceptor" evidence="1">
    <location>
        <position position="284"/>
    </location>
</feature>
<feature type="binding site" description="in homodimeric partner" evidence="1">
    <location>
        <position position="113"/>
    </location>
    <ligand>
        <name>substrate</name>
    </ligand>
</feature>
<feature type="binding site" evidence="1">
    <location>
        <position position="163"/>
    </location>
    <ligand>
        <name>substrate</name>
    </ligand>
</feature>
<feature type="binding site" evidence="1">
    <location>
        <position position="167"/>
    </location>
    <ligand>
        <name>substrate</name>
    </ligand>
</feature>
<feature type="binding site" description="via carbamate group" evidence="1">
    <location>
        <position position="191"/>
    </location>
    <ligand>
        <name>Mg(2+)</name>
        <dbReference type="ChEBI" id="CHEBI:18420"/>
    </ligand>
</feature>
<feature type="binding site" evidence="1">
    <location>
        <position position="193"/>
    </location>
    <ligand>
        <name>Mg(2+)</name>
        <dbReference type="ChEBI" id="CHEBI:18420"/>
    </ligand>
</feature>
<feature type="binding site" evidence="1">
    <location>
        <position position="194"/>
    </location>
    <ligand>
        <name>Mg(2+)</name>
        <dbReference type="ChEBI" id="CHEBI:18420"/>
    </ligand>
</feature>
<feature type="binding site" evidence="1">
    <location>
        <position position="285"/>
    </location>
    <ligand>
        <name>substrate</name>
    </ligand>
</feature>
<feature type="binding site" evidence="1">
    <location>
        <position position="317"/>
    </location>
    <ligand>
        <name>substrate</name>
    </ligand>
</feature>
<feature type="binding site" evidence="1">
    <location>
        <position position="369"/>
    </location>
    <ligand>
        <name>substrate</name>
    </ligand>
</feature>
<feature type="site" description="Transition state stabilizer" evidence="1">
    <location>
        <position position="324"/>
    </location>
</feature>
<feature type="modified residue" description="N6,N6,N6-trimethyllysine" evidence="1">
    <location>
        <position position="4"/>
    </location>
</feature>
<feature type="modified residue" description="N6-carboxylysine" evidence="1">
    <location>
        <position position="191"/>
    </location>
</feature>
<feature type="non-terminal residue">
    <location>
        <position position="1"/>
    </location>
</feature>
<dbReference type="EC" id="4.1.1.39" evidence="1"/>
<dbReference type="EMBL" id="L01952">
    <property type="protein sequence ID" value="AAA84648.2"/>
    <property type="molecule type" value="Genomic_DNA"/>
</dbReference>
<dbReference type="SMR" id="P28451"/>
<dbReference type="GO" id="GO:0009507">
    <property type="term" value="C:chloroplast"/>
    <property type="evidence" value="ECO:0007669"/>
    <property type="project" value="UniProtKB-SubCell"/>
</dbReference>
<dbReference type="GO" id="GO:0000287">
    <property type="term" value="F:magnesium ion binding"/>
    <property type="evidence" value="ECO:0007669"/>
    <property type="project" value="InterPro"/>
</dbReference>
<dbReference type="GO" id="GO:0004497">
    <property type="term" value="F:monooxygenase activity"/>
    <property type="evidence" value="ECO:0007669"/>
    <property type="project" value="UniProtKB-KW"/>
</dbReference>
<dbReference type="GO" id="GO:0016984">
    <property type="term" value="F:ribulose-bisphosphate carboxylase activity"/>
    <property type="evidence" value="ECO:0007669"/>
    <property type="project" value="UniProtKB-EC"/>
</dbReference>
<dbReference type="GO" id="GO:0009853">
    <property type="term" value="P:photorespiration"/>
    <property type="evidence" value="ECO:0007669"/>
    <property type="project" value="UniProtKB-KW"/>
</dbReference>
<dbReference type="GO" id="GO:0019253">
    <property type="term" value="P:reductive pentose-phosphate cycle"/>
    <property type="evidence" value="ECO:0007669"/>
    <property type="project" value="UniProtKB-KW"/>
</dbReference>
<dbReference type="CDD" id="cd08212">
    <property type="entry name" value="RuBisCO_large_I"/>
    <property type="match status" value="1"/>
</dbReference>
<dbReference type="FunFam" id="3.20.20.110:FF:000001">
    <property type="entry name" value="Ribulose bisphosphate carboxylase large chain"/>
    <property type="match status" value="1"/>
</dbReference>
<dbReference type="FunFam" id="3.30.70.150:FF:000001">
    <property type="entry name" value="Ribulose bisphosphate carboxylase large chain"/>
    <property type="match status" value="1"/>
</dbReference>
<dbReference type="Gene3D" id="3.20.20.110">
    <property type="entry name" value="Ribulose bisphosphate carboxylase, large subunit, C-terminal domain"/>
    <property type="match status" value="1"/>
</dbReference>
<dbReference type="Gene3D" id="3.30.70.150">
    <property type="entry name" value="RuBisCO large subunit, N-terminal domain"/>
    <property type="match status" value="1"/>
</dbReference>
<dbReference type="HAMAP" id="MF_01338">
    <property type="entry name" value="RuBisCO_L_type1"/>
    <property type="match status" value="1"/>
</dbReference>
<dbReference type="InterPro" id="IPR033966">
    <property type="entry name" value="RuBisCO"/>
</dbReference>
<dbReference type="InterPro" id="IPR020878">
    <property type="entry name" value="RuBisCo_large_chain_AS"/>
</dbReference>
<dbReference type="InterPro" id="IPR000685">
    <property type="entry name" value="RuBisCO_lsu_C"/>
</dbReference>
<dbReference type="InterPro" id="IPR036376">
    <property type="entry name" value="RuBisCO_lsu_C_sf"/>
</dbReference>
<dbReference type="InterPro" id="IPR017443">
    <property type="entry name" value="RuBisCO_lsu_fd_N"/>
</dbReference>
<dbReference type="InterPro" id="IPR036422">
    <property type="entry name" value="RuBisCO_lsu_N_sf"/>
</dbReference>
<dbReference type="InterPro" id="IPR020888">
    <property type="entry name" value="RuBisCO_lsuI"/>
</dbReference>
<dbReference type="NCBIfam" id="NF003252">
    <property type="entry name" value="PRK04208.1"/>
    <property type="match status" value="1"/>
</dbReference>
<dbReference type="PANTHER" id="PTHR42704">
    <property type="entry name" value="RIBULOSE BISPHOSPHATE CARBOXYLASE"/>
    <property type="match status" value="1"/>
</dbReference>
<dbReference type="PANTHER" id="PTHR42704:SF15">
    <property type="entry name" value="RIBULOSE BISPHOSPHATE CARBOXYLASE LARGE CHAIN"/>
    <property type="match status" value="1"/>
</dbReference>
<dbReference type="Pfam" id="PF00016">
    <property type="entry name" value="RuBisCO_large"/>
    <property type="match status" value="1"/>
</dbReference>
<dbReference type="Pfam" id="PF02788">
    <property type="entry name" value="RuBisCO_large_N"/>
    <property type="match status" value="1"/>
</dbReference>
<dbReference type="SFLD" id="SFLDG01052">
    <property type="entry name" value="RuBisCO"/>
    <property type="match status" value="1"/>
</dbReference>
<dbReference type="SFLD" id="SFLDS00014">
    <property type="entry name" value="RuBisCO"/>
    <property type="match status" value="1"/>
</dbReference>
<dbReference type="SFLD" id="SFLDG00301">
    <property type="entry name" value="RuBisCO-like_proteins"/>
    <property type="match status" value="1"/>
</dbReference>
<dbReference type="SUPFAM" id="SSF51649">
    <property type="entry name" value="RuBisCo, C-terminal domain"/>
    <property type="match status" value="1"/>
</dbReference>
<dbReference type="SUPFAM" id="SSF54966">
    <property type="entry name" value="RuBisCO, large subunit, small (N-terminal) domain"/>
    <property type="match status" value="1"/>
</dbReference>
<dbReference type="PROSITE" id="PS00157">
    <property type="entry name" value="RUBISCO_LARGE"/>
    <property type="match status" value="1"/>
</dbReference>
<geneLocation type="chloroplast"/>
<organism>
    <name type="scientific">Sarracenia flava</name>
    <name type="common">Yellow pitcher plant</name>
    <dbReference type="NCBI Taxonomy" id="4359"/>
    <lineage>
        <taxon>Eukaryota</taxon>
        <taxon>Viridiplantae</taxon>
        <taxon>Streptophyta</taxon>
        <taxon>Embryophyta</taxon>
        <taxon>Tracheophyta</taxon>
        <taxon>Spermatophyta</taxon>
        <taxon>Magnoliopsida</taxon>
        <taxon>eudicotyledons</taxon>
        <taxon>Gunneridae</taxon>
        <taxon>Pentapetalae</taxon>
        <taxon>asterids</taxon>
        <taxon>Ericales</taxon>
        <taxon>Sarraceniaceae</taxon>
        <taxon>Sarracenia</taxon>
    </lineage>
</organism>
<proteinExistence type="inferred from homology"/>
<name>RBL_SARFL</name>
<sequence length="465" mass="51632">VGFKAGVKDYKLTYYTPDYETKATDILAAFRVTPQPGVPPEEAGAAVAAESSTGTWTTVWTDGLTSLDRYKGRCYHIEPVAGEENQYIAYVAYPLDLFEEGSVTNMFTSIVGNVFGFKALRALRLEDLRIPPAYSKTFQGPPHGIQVERDKLNKYGRPLLGCTIKPKLGLSAKNYGRAVYECLRGGLDFTKDDENVNSQPFMRWRDRFLFCAEAIYKAQAETGEIKGHYLNATAGTWEEMIKRAVFARELGVPIVMHDYLTGGFTANTSLAHYCRDNGLLLHIHRAMHAVIDRQKNHGIHFRVLAKALRMSGGDHIHAGTVVGKLEGERDITLGFVDLLREDYIEQDRTRGIYFSQDWVSLPGVLPVASGGIHVWHMPALTEIFGDDSVLQFGGGTLGHPWGNAPGAVANRVALEACVQARNEGRDLAREGNEIIREASKWSPELAAACEVWKEIKFEFPAMDTL</sequence>
<evidence type="ECO:0000255" key="1">
    <source>
        <dbReference type="HAMAP-Rule" id="MF_01338"/>
    </source>
</evidence>